<gene>
    <name evidence="1" type="primary">epmA</name>
    <name type="synonym">yjeA</name>
    <name type="ordered locus">E2348C_4483</name>
</gene>
<accession>B7UPX7</accession>
<evidence type="ECO:0000255" key="1">
    <source>
        <dbReference type="HAMAP-Rule" id="MF_00174"/>
    </source>
</evidence>
<organism>
    <name type="scientific">Escherichia coli O127:H6 (strain E2348/69 / EPEC)</name>
    <dbReference type="NCBI Taxonomy" id="574521"/>
    <lineage>
        <taxon>Bacteria</taxon>
        <taxon>Pseudomonadati</taxon>
        <taxon>Pseudomonadota</taxon>
        <taxon>Gammaproteobacteria</taxon>
        <taxon>Enterobacterales</taxon>
        <taxon>Enterobacteriaceae</taxon>
        <taxon>Escherichia</taxon>
    </lineage>
</organism>
<reference key="1">
    <citation type="journal article" date="2009" name="J. Bacteriol.">
        <title>Complete genome sequence and comparative genome analysis of enteropathogenic Escherichia coli O127:H6 strain E2348/69.</title>
        <authorList>
            <person name="Iguchi A."/>
            <person name="Thomson N.R."/>
            <person name="Ogura Y."/>
            <person name="Saunders D."/>
            <person name="Ooka T."/>
            <person name="Henderson I.R."/>
            <person name="Harris D."/>
            <person name="Asadulghani M."/>
            <person name="Kurokawa K."/>
            <person name="Dean P."/>
            <person name="Kenny B."/>
            <person name="Quail M.A."/>
            <person name="Thurston S."/>
            <person name="Dougan G."/>
            <person name="Hayashi T."/>
            <person name="Parkhill J."/>
            <person name="Frankel G."/>
        </authorList>
    </citation>
    <scope>NUCLEOTIDE SEQUENCE [LARGE SCALE GENOMIC DNA]</scope>
    <source>
        <strain>E2348/69 / EPEC</strain>
    </source>
</reference>
<feature type="chain" id="PRO_1000199256" description="Elongation factor P--(R)-beta-lysine ligase">
    <location>
        <begin position="1"/>
        <end position="325"/>
    </location>
</feature>
<feature type="binding site" evidence="1">
    <location>
        <begin position="76"/>
        <end position="78"/>
    </location>
    <ligand>
        <name>substrate</name>
    </ligand>
</feature>
<feature type="binding site" evidence="1">
    <location>
        <begin position="100"/>
        <end position="102"/>
    </location>
    <ligand>
        <name>ATP</name>
        <dbReference type="ChEBI" id="CHEBI:30616"/>
    </ligand>
</feature>
<feature type="binding site" evidence="1">
    <location>
        <position position="109"/>
    </location>
    <ligand>
        <name>ATP</name>
        <dbReference type="ChEBI" id="CHEBI:30616"/>
    </ligand>
</feature>
<feature type="binding site" evidence="1">
    <location>
        <position position="118"/>
    </location>
    <ligand>
        <name>substrate</name>
    </ligand>
</feature>
<feature type="binding site" evidence="1">
    <location>
        <begin position="244"/>
        <end position="245"/>
    </location>
    <ligand>
        <name>ATP</name>
        <dbReference type="ChEBI" id="CHEBI:30616"/>
    </ligand>
</feature>
<feature type="binding site" evidence="1">
    <location>
        <position position="251"/>
    </location>
    <ligand>
        <name>substrate</name>
    </ligand>
</feature>
<feature type="binding site" evidence="1">
    <location>
        <position position="300"/>
    </location>
    <ligand>
        <name>ATP</name>
        <dbReference type="ChEBI" id="CHEBI:30616"/>
    </ligand>
</feature>
<proteinExistence type="inferred from homology"/>
<name>EPMA_ECO27</name>
<keyword id="KW-0067">ATP-binding</keyword>
<keyword id="KW-0436">Ligase</keyword>
<keyword id="KW-0547">Nucleotide-binding</keyword>
<keyword id="KW-1185">Reference proteome</keyword>
<comment type="function">
    <text evidence="1">With EpmB is involved in the beta-lysylation step of the post-translational modification of translation elongation factor P (EF-P) on 'Lys-34'. Catalyzes the ATP-dependent activation of (R)-beta-lysine produced by EpmB, forming a lysyl-adenylate, from which the beta-lysyl moiety is then transferred to the epsilon-amino group of EF-P 'Lys-34'.</text>
</comment>
<comment type="catalytic activity">
    <reaction evidence="1">
        <text>D-beta-lysine + L-lysyl-[protein] + ATP = N(6)-((3R)-3,6-diaminohexanoyl)-L-lysyl-[protein] + AMP + diphosphate + H(+)</text>
        <dbReference type="Rhea" id="RHEA:83435"/>
        <dbReference type="Rhea" id="RHEA-COMP:9752"/>
        <dbReference type="Rhea" id="RHEA-COMP:20131"/>
        <dbReference type="ChEBI" id="CHEBI:15378"/>
        <dbReference type="ChEBI" id="CHEBI:29969"/>
        <dbReference type="ChEBI" id="CHEBI:30616"/>
        <dbReference type="ChEBI" id="CHEBI:33019"/>
        <dbReference type="ChEBI" id="CHEBI:84138"/>
        <dbReference type="ChEBI" id="CHEBI:156053"/>
        <dbReference type="ChEBI" id="CHEBI:456215"/>
    </reaction>
    <physiologicalReaction direction="left-to-right" evidence="1">
        <dbReference type="Rhea" id="RHEA:83436"/>
    </physiologicalReaction>
</comment>
<comment type="subunit">
    <text evidence="1">Homodimer.</text>
</comment>
<comment type="similarity">
    <text evidence="1">Belongs to the class-II aminoacyl-tRNA synthetase family. EpmA subfamily.</text>
</comment>
<sequence length="325" mass="36976">MSETASWQPSASIPNLLKRAAIMAEIRRFFADRGVLEVETPCMSQATVTDIHLVPFETRFVGPGHSQGMNLWLMTSPEYHMKRLLVAGCGPVFQLCRSFRNEEMGRYHNPEFTMLEWYRPHYDMYRLMNEVDDLLQQVLDCPAAESLSYQQAFLRYLEIDPLSADKTQLREVAAKLDLSNVADTEEDRDTLLQLLFTFGVEPNIGKEKPTFVYHFPASQASLAQISTEDHRVAERFEVYYKGIELANGFHELTDAREQQQRFEQDNRKRAARGLPQHPIDQNLIEALKVGMPDCSGVALGVDRLVMLALGAETLAEVIAFSVDRA</sequence>
<protein>
    <recommendedName>
        <fullName evidence="1">Elongation factor P--(R)-beta-lysine ligase</fullName>
        <shortName evidence="1">EF-P--(R)-beta-lysine ligase</shortName>
        <ecNumber evidence="1">6.3.2.-</ecNumber>
    </recommendedName>
    <alternativeName>
        <fullName evidence="1">EF-P post-translational modification enzyme A</fullName>
    </alternativeName>
    <alternativeName>
        <fullName evidence="1">EF-P-lysine lysyltransferase</fullName>
    </alternativeName>
</protein>
<dbReference type="EC" id="6.3.2.-" evidence="1"/>
<dbReference type="EMBL" id="FM180568">
    <property type="protein sequence ID" value="CAS12031.1"/>
    <property type="molecule type" value="Genomic_DNA"/>
</dbReference>
<dbReference type="RefSeq" id="WP_000004771.1">
    <property type="nucleotide sequence ID" value="NC_011601.1"/>
</dbReference>
<dbReference type="SMR" id="B7UPX7"/>
<dbReference type="GeneID" id="93777667"/>
<dbReference type="KEGG" id="ecg:E2348C_4483"/>
<dbReference type="HOGENOM" id="CLU_008255_1_1_6"/>
<dbReference type="Proteomes" id="UP000008205">
    <property type="component" value="Chromosome"/>
</dbReference>
<dbReference type="GO" id="GO:0005829">
    <property type="term" value="C:cytosol"/>
    <property type="evidence" value="ECO:0007669"/>
    <property type="project" value="TreeGrafter"/>
</dbReference>
<dbReference type="GO" id="GO:0016880">
    <property type="term" value="F:acid-ammonia (or amide) ligase activity"/>
    <property type="evidence" value="ECO:0007669"/>
    <property type="project" value="UniProtKB-UniRule"/>
</dbReference>
<dbReference type="GO" id="GO:0005524">
    <property type="term" value="F:ATP binding"/>
    <property type="evidence" value="ECO:0007669"/>
    <property type="project" value="UniProtKB-UniRule"/>
</dbReference>
<dbReference type="GO" id="GO:0004824">
    <property type="term" value="F:lysine-tRNA ligase activity"/>
    <property type="evidence" value="ECO:0007669"/>
    <property type="project" value="InterPro"/>
</dbReference>
<dbReference type="GO" id="GO:0000049">
    <property type="term" value="F:tRNA binding"/>
    <property type="evidence" value="ECO:0007669"/>
    <property type="project" value="TreeGrafter"/>
</dbReference>
<dbReference type="GO" id="GO:0006430">
    <property type="term" value="P:lysyl-tRNA aminoacylation"/>
    <property type="evidence" value="ECO:0007669"/>
    <property type="project" value="InterPro"/>
</dbReference>
<dbReference type="FunFam" id="3.30.930.10:FF:000017">
    <property type="entry name" value="Elongation factor P--(R)-beta-lysine ligase"/>
    <property type="match status" value="1"/>
</dbReference>
<dbReference type="Gene3D" id="3.30.930.10">
    <property type="entry name" value="Bira Bifunctional Protein, Domain 2"/>
    <property type="match status" value="1"/>
</dbReference>
<dbReference type="HAMAP" id="MF_00174">
    <property type="entry name" value="EF_P_modif_A"/>
    <property type="match status" value="1"/>
</dbReference>
<dbReference type="InterPro" id="IPR004364">
    <property type="entry name" value="Aa-tRNA-synt_II"/>
</dbReference>
<dbReference type="InterPro" id="IPR006195">
    <property type="entry name" value="aa-tRNA-synth_II"/>
</dbReference>
<dbReference type="InterPro" id="IPR045864">
    <property type="entry name" value="aa-tRNA-synth_II/BPL/LPL"/>
</dbReference>
<dbReference type="InterPro" id="IPR004525">
    <property type="entry name" value="EpmA"/>
</dbReference>
<dbReference type="InterPro" id="IPR018149">
    <property type="entry name" value="Lys-tRNA-synth_II_C"/>
</dbReference>
<dbReference type="NCBIfam" id="TIGR00462">
    <property type="entry name" value="genX"/>
    <property type="match status" value="1"/>
</dbReference>
<dbReference type="NCBIfam" id="NF006828">
    <property type="entry name" value="PRK09350.1"/>
    <property type="match status" value="1"/>
</dbReference>
<dbReference type="PANTHER" id="PTHR42918:SF6">
    <property type="entry name" value="ELONGATION FACTOR P--(R)-BETA-LYSINE LIGASE"/>
    <property type="match status" value="1"/>
</dbReference>
<dbReference type="PANTHER" id="PTHR42918">
    <property type="entry name" value="LYSYL-TRNA SYNTHETASE"/>
    <property type="match status" value="1"/>
</dbReference>
<dbReference type="Pfam" id="PF00152">
    <property type="entry name" value="tRNA-synt_2"/>
    <property type="match status" value="1"/>
</dbReference>
<dbReference type="PRINTS" id="PR00982">
    <property type="entry name" value="TRNASYNTHLYS"/>
</dbReference>
<dbReference type="SUPFAM" id="SSF55681">
    <property type="entry name" value="Class II aaRS and biotin synthetases"/>
    <property type="match status" value="1"/>
</dbReference>
<dbReference type="PROSITE" id="PS50862">
    <property type="entry name" value="AA_TRNA_LIGASE_II"/>
    <property type="match status" value="1"/>
</dbReference>